<proteinExistence type="evidence at transcript level"/>
<reference key="1">
    <citation type="journal article" date="1999" name="Nature">
        <title>Sequence and analysis of chromosome 4 of the plant Arabidopsis thaliana.</title>
        <authorList>
            <person name="Mayer K.F.X."/>
            <person name="Schueller C."/>
            <person name="Wambutt R."/>
            <person name="Murphy G."/>
            <person name="Volckaert G."/>
            <person name="Pohl T."/>
            <person name="Duesterhoeft A."/>
            <person name="Stiekema W."/>
            <person name="Entian K.-D."/>
            <person name="Terryn N."/>
            <person name="Harris B."/>
            <person name="Ansorge W."/>
            <person name="Brandt P."/>
            <person name="Grivell L.A."/>
            <person name="Rieger M."/>
            <person name="Weichselgartner M."/>
            <person name="de Simone V."/>
            <person name="Obermaier B."/>
            <person name="Mache R."/>
            <person name="Mueller M."/>
            <person name="Kreis M."/>
            <person name="Delseny M."/>
            <person name="Puigdomenech P."/>
            <person name="Watson M."/>
            <person name="Schmidtheini T."/>
            <person name="Reichert B."/>
            <person name="Portetelle D."/>
            <person name="Perez-Alonso M."/>
            <person name="Boutry M."/>
            <person name="Bancroft I."/>
            <person name="Vos P."/>
            <person name="Hoheisel J."/>
            <person name="Zimmermann W."/>
            <person name="Wedler H."/>
            <person name="Ridley P."/>
            <person name="Langham S.-A."/>
            <person name="McCullagh B."/>
            <person name="Bilham L."/>
            <person name="Robben J."/>
            <person name="van der Schueren J."/>
            <person name="Grymonprez B."/>
            <person name="Chuang Y.-J."/>
            <person name="Vandenbussche F."/>
            <person name="Braeken M."/>
            <person name="Weltjens I."/>
            <person name="Voet M."/>
            <person name="Bastiaens I."/>
            <person name="Aert R."/>
            <person name="Defoor E."/>
            <person name="Weitzenegger T."/>
            <person name="Bothe G."/>
            <person name="Ramsperger U."/>
            <person name="Hilbert H."/>
            <person name="Braun M."/>
            <person name="Holzer E."/>
            <person name="Brandt A."/>
            <person name="Peters S."/>
            <person name="van Staveren M."/>
            <person name="Dirkse W."/>
            <person name="Mooijman P."/>
            <person name="Klein Lankhorst R."/>
            <person name="Rose M."/>
            <person name="Hauf J."/>
            <person name="Koetter P."/>
            <person name="Berneiser S."/>
            <person name="Hempel S."/>
            <person name="Feldpausch M."/>
            <person name="Lamberth S."/>
            <person name="Van den Daele H."/>
            <person name="De Keyser A."/>
            <person name="Buysshaert C."/>
            <person name="Gielen J."/>
            <person name="Villarroel R."/>
            <person name="De Clercq R."/>
            <person name="van Montagu M."/>
            <person name="Rogers J."/>
            <person name="Cronin A."/>
            <person name="Quail M.A."/>
            <person name="Bray-Allen S."/>
            <person name="Clark L."/>
            <person name="Doggett J."/>
            <person name="Hall S."/>
            <person name="Kay M."/>
            <person name="Lennard N."/>
            <person name="McLay K."/>
            <person name="Mayes R."/>
            <person name="Pettett A."/>
            <person name="Rajandream M.A."/>
            <person name="Lyne M."/>
            <person name="Benes V."/>
            <person name="Rechmann S."/>
            <person name="Borkova D."/>
            <person name="Bloecker H."/>
            <person name="Scharfe M."/>
            <person name="Grimm M."/>
            <person name="Loehnert T.-H."/>
            <person name="Dose S."/>
            <person name="de Haan M."/>
            <person name="Maarse A.C."/>
            <person name="Schaefer M."/>
            <person name="Mueller-Auer S."/>
            <person name="Gabel C."/>
            <person name="Fuchs M."/>
            <person name="Fartmann B."/>
            <person name="Granderath K."/>
            <person name="Dauner D."/>
            <person name="Herzl A."/>
            <person name="Neumann S."/>
            <person name="Argiriou A."/>
            <person name="Vitale D."/>
            <person name="Liguori R."/>
            <person name="Piravandi E."/>
            <person name="Massenet O."/>
            <person name="Quigley F."/>
            <person name="Clabauld G."/>
            <person name="Muendlein A."/>
            <person name="Felber R."/>
            <person name="Schnabl S."/>
            <person name="Hiller R."/>
            <person name="Schmidt W."/>
            <person name="Lecharny A."/>
            <person name="Aubourg S."/>
            <person name="Chefdor F."/>
            <person name="Cooke R."/>
            <person name="Berger C."/>
            <person name="Monfort A."/>
            <person name="Casacuberta E."/>
            <person name="Gibbons T."/>
            <person name="Weber N."/>
            <person name="Vandenbol M."/>
            <person name="Bargues M."/>
            <person name="Terol J."/>
            <person name="Torres A."/>
            <person name="Perez-Perez A."/>
            <person name="Purnelle B."/>
            <person name="Bent E."/>
            <person name="Johnson S."/>
            <person name="Tacon D."/>
            <person name="Jesse T."/>
            <person name="Heijnen L."/>
            <person name="Schwarz S."/>
            <person name="Scholler P."/>
            <person name="Heber S."/>
            <person name="Francs P."/>
            <person name="Bielke C."/>
            <person name="Frishman D."/>
            <person name="Haase D."/>
            <person name="Lemcke K."/>
            <person name="Mewes H.-W."/>
            <person name="Stocker S."/>
            <person name="Zaccaria P."/>
            <person name="Bevan M."/>
            <person name="Wilson R.K."/>
            <person name="de la Bastide M."/>
            <person name="Habermann K."/>
            <person name="Parnell L."/>
            <person name="Dedhia N."/>
            <person name="Gnoj L."/>
            <person name="Schutz K."/>
            <person name="Huang E."/>
            <person name="Spiegel L."/>
            <person name="Sekhon M."/>
            <person name="Murray J."/>
            <person name="Sheet P."/>
            <person name="Cordes M."/>
            <person name="Abu-Threideh J."/>
            <person name="Stoneking T."/>
            <person name="Kalicki J."/>
            <person name="Graves T."/>
            <person name="Harmon G."/>
            <person name="Edwards J."/>
            <person name="Latreille P."/>
            <person name="Courtney L."/>
            <person name="Cloud J."/>
            <person name="Abbott A."/>
            <person name="Scott K."/>
            <person name="Johnson D."/>
            <person name="Minx P."/>
            <person name="Bentley D."/>
            <person name="Fulton B."/>
            <person name="Miller N."/>
            <person name="Greco T."/>
            <person name="Kemp K."/>
            <person name="Kramer J."/>
            <person name="Fulton L."/>
            <person name="Mardis E."/>
            <person name="Dante M."/>
            <person name="Pepin K."/>
            <person name="Hillier L.W."/>
            <person name="Nelson J."/>
            <person name="Spieth J."/>
            <person name="Ryan E."/>
            <person name="Andrews S."/>
            <person name="Geisel C."/>
            <person name="Layman D."/>
            <person name="Du H."/>
            <person name="Ali J."/>
            <person name="Berghoff A."/>
            <person name="Jones K."/>
            <person name="Drone K."/>
            <person name="Cotton M."/>
            <person name="Joshu C."/>
            <person name="Antonoiu B."/>
            <person name="Zidanic M."/>
            <person name="Strong C."/>
            <person name="Sun H."/>
            <person name="Lamar B."/>
            <person name="Yordan C."/>
            <person name="Ma P."/>
            <person name="Zhong J."/>
            <person name="Preston R."/>
            <person name="Vil D."/>
            <person name="Shekher M."/>
            <person name="Matero A."/>
            <person name="Shah R."/>
            <person name="Swaby I.K."/>
            <person name="O'Shaughnessy A."/>
            <person name="Rodriguez M."/>
            <person name="Hoffman J."/>
            <person name="Till S."/>
            <person name="Granat S."/>
            <person name="Shohdy N."/>
            <person name="Hasegawa A."/>
            <person name="Hameed A."/>
            <person name="Lodhi M."/>
            <person name="Johnson A."/>
            <person name="Chen E."/>
            <person name="Marra M.A."/>
            <person name="Martienssen R."/>
            <person name="McCombie W.R."/>
        </authorList>
    </citation>
    <scope>NUCLEOTIDE SEQUENCE [LARGE SCALE GENOMIC DNA]</scope>
    <source>
        <strain>cv. Columbia</strain>
    </source>
</reference>
<reference key="2">
    <citation type="journal article" date="2017" name="Plant J.">
        <title>Araport11: a complete reannotation of the Arabidopsis thaliana reference genome.</title>
        <authorList>
            <person name="Cheng C.Y."/>
            <person name="Krishnakumar V."/>
            <person name="Chan A.P."/>
            <person name="Thibaud-Nissen F."/>
            <person name="Schobel S."/>
            <person name="Town C.D."/>
        </authorList>
    </citation>
    <scope>GENOME REANNOTATION</scope>
    <source>
        <strain>cv. Columbia</strain>
    </source>
</reference>
<reference key="3">
    <citation type="submission" date="2003-10" db="EMBL/GenBank/DDBJ databases">
        <title>Arabidopsis ORF clones.</title>
        <authorList>
            <person name="Cheuk R.F."/>
            <person name="Chen H."/>
            <person name="Kim C.J."/>
            <person name="Shinn P."/>
            <person name="Carninci P."/>
            <person name="Hayashizaki Y."/>
            <person name="Ishida J."/>
            <person name="Kamiya A."/>
            <person name="Kawai J."/>
            <person name="Narusaka M."/>
            <person name="Sakurai T."/>
            <person name="Satou M."/>
            <person name="Seki M."/>
            <person name="Shinozaki K."/>
            <person name="Ecker J.R."/>
        </authorList>
    </citation>
    <scope>NUCLEOTIDE SEQUENCE [LARGE SCALE MRNA]</scope>
    <source>
        <strain>cv. Columbia</strain>
    </source>
</reference>
<reference key="4">
    <citation type="submission" date="2004-09" db="EMBL/GenBank/DDBJ databases">
        <title>Large-scale analysis of RIKEN Arabidopsis full-length (RAFL) cDNAs.</title>
        <authorList>
            <person name="Totoki Y."/>
            <person name="Seki M."/>
            <person name="Ishida J."/>
            <person name="Nakajima M."/>
            <person name="Enju A."/>
            <person name="Kamiya A."/>
            <person name="Narusaka M."/>
            <person name="Shin-i T."/>
            <person name="Nakagawa M."/>
            <person name="Sakamoto N."/>
            <person name="Oishi K."/>
            <person name="Kohara Y."/>
            <person name="Kobayashi M."/>
            <person name="Toyoda A."/>
            <person name="Sakaki Y."/>
            <person name="Sakurai T."/>
            <person name="Iida K."/>
            <person name="Akiyama K."/>
            <person name="Satou M."/>
            <person name="Toyoda T."/>
            <person name="Konagaya A."/>
            <person name="Carninci P."/>
            <person name="Kawai J."/>
            <person name="Hayashizaki Y."/>
            <person name="Shinozaki K."/>
        </authorList>
    </citation>
    <scope>NUCLEOTIDE SEQUENCE [LARGE SCALE MRNA]</scope>
    <source>
        <strain>cv. Columbia</strain>
    </source>
</reference>
<reference key="5">
    <citation type="journal article" date="2008" name="Trends Plant Sci.">
        <title>The plant B3 superfamily.</title>
        <authorList>
            <person name="Swaminathan K."/>
            <person name="Peterson K."/>
            <person name="Jack T."/>
        </authorList>
    </citation>
    <scope>GENE FAMILY</scope>
</reference>
<sequence length="190" mass="22122">MVITRNMKARATSVSHRQSQQDPESPVKKFFKLVLPSTMKDKMMRIPPRFVKLQGSKLSEVVTLVTPAGYKRSIKLKRIGEEIWFHEGWSEFAEAHSIEEGHFLLFEYKKNSSFRVIIFNASACETNYPLDAVHIIDSDDDVIEITGKEFDTEHKSKKRPRDIEFDKILHDVDVMQVLKEEEEDKRVLRG</sequence>
<comment type="subcellular location">
    <subcellularLocation>
        <location evidence="1">Nucleus</location>
    </subcellularLocation>
</comment>
<feature type="chain" id="PRO_0000375146" description="B3 domain-containing protein At4g01580">
    <location>
        <begin position="1"/>
        <end position="190"/>
    </location>
</feature>
<feature type="DNA-binding region" description="TF-B3" evidence="1">
    <location>
        <begin position="29"/>
        <end position="122"/>
    </location>
</feature>
<feature type="region of interest" description="Disordered" evidence="2">
    <location>
        <begin position="1"/>
        <end position="25"/>
    </location>
</feature>
<feature type="compositionally biased region" description="Polar residues" evidence="2">
    <location>
        <begin position="12"/>
        <end position="23"/>
    </location>
</feature>
<evidence type="ECO:0000255" key="1">
    <source>
        <dbReference type="PROSITE-ProRule" id="PRU00326"/>
    </source>
</evidence>
<evidence type="ECO:0000256" key="2">
    <source>
        <dbReference type="SAM" id="MobiDB-lite"/>
    </source>
</evidence>
<protein>
    <recommendedName>
        <fullName>B3 domain-containing protein At4g01580</fullName>
    </recommendedName>
</protein>
<dbReference type="EMBL" id="AF104919">
    <property type="protein sequence ID" value="AAC72857.1"/>
    <property type="molecule type" value="Genomic_DNA"/>
</dbReference>
<dbReference type="EMBL" id="AL161492">
    <property type="protein sequence ID" value="CAB77728.1"/>
    <property type="molecule type" value="Genomic_DNA"/>
</dbReference>
<dbReference type="EMBL" id="CP002687">
    <property type="protein sequence ID" value="AEE82045.1"/>
    <property type="molecule type" value="Genomic_DNA"/>
</dbReference>
<dbReference type="EMBL" id="BT010604">
    <property type="protein sequence ID" value="AAQ89626.1"/>
    <property type="molecule type" value="mRNA"/>
</dbReference>
<dbReference type="EMBL" id="AK175333">
    <property type="protein sequence ID" value="BAD43096.1"/>
    <property type="molecule type" value="mRNA"/>
</dbReference>
<dbReference type="PIR" id="T02015">
    <property type="entry name" value="T02015"/>
</dbReference>
<dbReference type="RefSeq" id="NP_192068.1">
    <property type="nucleotide sequence ID" value="NM_116389.3"/>
</dbReference>
<dbReference type="SMR" id="Q9ZSH7"/>
<dbReference type="BioGRID" id="13407">
    <property type="interactions" value="3"/>
</dbReference>
<dbReference type="FunCoup" id="Q9ZSH7">
    <property type="interactions" value="97"/>
</dbReference>
<dbReference type="IntAct" id="Q9ZSH7">
    <property type="interactions" value="3"/>
</dbReference>
<dbReference type="STRING" id="3702.Q9ZSH7"/>
<dbReference type="PaxDb" id="3702-AT4G01580.1"/>
<dbReference type="EnsemblPlants" id="AT4G01580.1">
    <property type="protein sequence ID" value="AT4G01580.1"/>
    <property type="gene ID" value="AT4G01580"/>
</dbReference>
<dbReference type="GeneID" id="828118"/>
<dbReference type="Gramene" id="AT4G01580.1">
    <property type="protein sequence ID" value="AT4G01580.1"/>
    <property type="gene ID" value="AT4G01580"/>
</dbReference>
<dbReference type="KEGG" id="ath:AT4G01580"/>
<dbReference type="Araport" id="AT4G01580"/>
<dbReference type="TAIR" id="AT4G01580"/>
<dbReference type="HOGENOM" id="CLU_112195_0_0_1"/>
<dbReference type="InParanoid" id="Q9ZSH7"/>
<dbReference type="OMA" id="ASACETN"/>
<dbReference type="PhylomeDB" id="Q9ZSH7"/>
<dbReference type="PRO" id="PR:Q9ZSH7"/>
<dbReference type="Proteomes" id="UP000006548">
    <property type="component" value="Chromosome 4"/>
</dbReference>
<dbReference type="ExpressionAtlas" id="Q9ZSH7">
    <property type="expression patterns" value="baseline and differential"/>
</dbReference>
<dbReference type="GO" id="GO:0005634">
    <property type="term" value="C:nucleus"/>
    <property type="evidence" value="ECO:0007669"/>
    <property type="project" value="UniProtKB-SubCell"/>
</dbReference>
<dbReference type="GO" id="GO:0003677">
    <property type="term" value="F:DNA binding"/>
    <property type="evidence" value="ECO:0007669"/>
    <property type="project" value="UniProtKB-KW"/>
</dbReference>
<dbReference type="CDD" id="cd10017">
    <property type="entry name" value="B3_DNA"/>
    <property type="match status" value="1"/>
</dbReference>
<dbReference type="Gene3D" id="2.40.330.10">
    <property type="entry name" value="DNA-binding pseudobarrel domain"/>
    <property type="match status" value="1"/>
</dbReference>
<dbReference type="InterPro" id="IPR003340">
    <property type="entry name" value="B3_DNA-bd"/>
</dbReference>
<dbReference type="InterPro" id="IPR015300">
    <property type="entry name" value="DNA-bd_pseudobarrel_sf"/>
</dbReference>
<dbReference type="InterPro" id="IPR050655">
    <property type="entry name" value="Plant_B3_domain"/>
</dbReference>
<dbReference type="PANTHER" id="PTHR31920">
    <property type="entry name" value="B3 DOMAIN-CONTAINING"/>
    <property type="match status" value="1"/>
</dbReference>
<dbReference type="PANTHER" id="PTHR31920:SF37">
    <property type="entry name" value="B3 DOMAIN-CONTAINING TRANSCRIPTION FACTOR VRN1"/>
    <property type="match status" value="1"/>
</dbReference>
<dbReference type="Pfam" id="PF02362">
    <property type="entry name" value="B3"/>
    <property type="match status" value="1"/>
</dbReference>
<dbReference type="SMART" id="SM01019">
    <property type="entry name" value="B3"/>
    <property type="match status" value="1"/>
</dbReference>
<dbReference type="SUPFAM" id="SSF101936">
    <property type="entry name" value="DNA-binding pseudobarrel domain"/>
    <property type="match status" value="1"/>
</dbReference>
<dbReference type="PROSITE" id="PS50863">
    <property type="entry name" value="B3"/>
    <property type="match status" value="1"/>
</dbReference>
<name>Y4158_ARATH</name>
<accession>Q9ZSH7</accession>
<keyword id="KW-0238">DNA-binding</keyword>
<keyword id="KW-0539">Nucleus</keyword>
<keyword id="KW-1185">Reference proteome</keyword>
<keyword id="KW-0804">Transcription</keyword>
<keyword id="KW-0805">Transcription regulation</keyword>
<organism>
    <name type="scientific">Arabidopsis thaliana</name>
    <name type="common">Mouse-ear cress</name>
    <dbReference type="NCBI Taxonomy" id="3702"/>
    <lineage>
        <taxon>Eukaryota</taxon>
        <taxon>Viridiplantae</taxon>
        <taxon>Streptophyta</taxon>
        <taxon>Embryophyta</taxon>
        <taxon>Tracheophyta</taxon>
        <taxon>Spermatophyta</taxon>
        <taxon>Magnoliopsida</taxon>
        <taxon>eudicotyledons</taxon>
        <taxon>Gunneridae</taxon>
        <taxon>Pentapetalae</taxon>
        <taxon>rosids</taxon>
        <taxon>malvids</taxon>
        <taxon>Brassicales</taxon>
        <taxon>Brassicaceae</taxon>
        <taxon>Camelineae</taxon>
        <taxon>Arabidopsis</taxon>
    </lineage>
</organism>
<gene>
    <name type="ordered locus">At4g01580</name>
    <name type="ORF">T15B16.18</name>
</gene>